<accession>P72297</accession>
<name>OCCP_RHIML</name>
<organism>
    <name type="scientific">Rhizobium meliloti</name>
    <name type="common">Ensifer meliloti</name>
    <name type="synonym">Sinorhizobium meliloti</name>
    <dbReference type="NCBI Taxonomy" id="382"/>
    <lineage>
        <taxon>Bacteria</taxon>
        <taxon>Pseudomonadati</taxon>
        <taxon>Pseudomonadota</taxon>
        <taxon>Alphaproteobacteria</taxon>
        <taxon>Hyphomicrobiales</taxon>
        <taxon>Rhizobiaceae</taxon>
        <taxon>Sinorhizobium/Ensifer group</taxon>
        <taxon>Sinorhizobium</taxon>
    </lineage>
</organism>
<protein>
    <recommendedName>
        <fullName>Octopine permease ATP-binding protein P</fullName>
    </recommendedName>
</protein>
<evidence type="ECO:0000255" key="1">
    <source>
        <dbReference type="PROSITE-ProRule" id="PRU00434"/>
    </source>
</evidence>
<evidence type="ECO:0000305" key="2"/>
<dbReference type="EMBL" id="U66830">
    <property type="protein sequence ID" value="AAB07520.1"/>
    <property type="molecule type" value="Genomic_DNA"/>
</dbReference>
<dbReference type="SMR" id="P72297"/>
<dbReference type="GO" id="GO:0005886">
    <property type="term" value="C:plasma membrane"/>
    <property type="evidence" value="ECO:0007669"/>
    <property type="project" value="UniProtKB-SubCell"/>
</dbReference>
<dbReference type="GO" id="GO:0015424">
    <property type="term" value="F:ABC-type amino acid transporter activity"/>
    <property type="evidence" value="ECO:0007669"/>
    <property type="project" value="InterPro"/>
</dbReference>
<dbReference type="GO" id="GO:0005524">
    <property type="term" value="F:ATP binding"/>
    <property type="evidence" value="ECO:0007669"/>
    <property type="project" value="UniProtKB-KW"/>
</dbReference>
<dbReference type="GO" id="GO:0016887">
    <property type="term" value="F:ATP hydrolysis activity"/>
    <property type="evidence" value="ECO:0007669"/>
    <property type="project" value="InterPro"/>
</dbReference>
<dbReference type="CDD" id="cd03262">
    <property type="entry name" value="ABC_HisP_GlnQ"/>
    <property type="match status" value="1"/>
</dbReference>
<dbReference type="FunFam" id="3.40.50.300:FF:000020">
    <property type="entry name" value="Amino acid ABC transporter ATP-binding component"/>
    <property type="match status" value="1"/>
</dbReference>
<dbReference type="Gene3D" id="3.40.50.300">
    <property type="entry name" value="P-loop containing nucleotide triphosphate hydrolases"/>
    <property type="match status" value="1"/>
</dbReference>
<dbReference type="InterPro" id="IPR003593">
    <property type="entry name" value="AAA+_ATPase"/>
</dbReference>
<dbReference type="InterPro" id="IPR030679">
    <property type="entry name" value="ABC_ATPase_HisP-typ"/>
</dbReference>
<dbReference type="InterPro" id="IPR003439">
    <property type="entry name" value="ABC_transporter-like_ATP-bd"/>
</dbReference>
<dbReference type="InterPro" id="IPR017871">
    <property type="entry name" value="ABC_transporter-like_CS"/>
</dbReference>
<dbReference type="InterPro" id="IPR050086">
    <property type="entry name" value="MetN_ABC_transporter-like"/>
</dbReference>
<dbReference type="InterPro" id="IPR027417">
    <property type="entry name" value="P-loop_NTPase"/>
</dbReference>
<dbReference type="PANTHER" id="PTHR43166">
    <property type="entry name" value="AMINO ACID IMPORT ATP-BINDING PROTEIN"/>
    <property type="match status" value="1"/>
</dbReference>
<dbReference type="PANTHER" id="PTHR43166:SF35">
    <property type="entry name" value="L-CYSTINE IMPORT ATP-BINDING PROTEIN TCYN"/>
    <property type="match status" value="1"/>
</dbReference>
<dbReference type="Pfam" id="PF00005">
    <property type="entry name" value="ABC_tran"/>
    <property type="match status" value="1"/>
</dbReference>
<dbReference type="PIRSF" id="PIRSF039085">
    <property type="entry name" value="ABC_ATPase_HisP"/>
    <property type="match status" value="1"/>
</dbReference>
<dbReference type="SMART" id="SM00382">
    <property type="entry name" value="AAA"/>
    <property type="match status" value="1"/>
</dbReference>
<dbReference type="SUPFAM" id="SSF52540">
    <property type="entry name" value="P-loop containing nucleoside triphosphate hydrolases"/>
    <property type="match status" value="1"/>
</dbReference>
<dbReference type="PROSITE" id="PS00211">
    <property type="entry name" value="ABC_TRANSPORTER_1"/>
    <property type="match status" value="1"/>
</dbReference>
<dbReference type="PROSITE" id="PS50893">
    <property type="entry name" value="ABC_TRANSPORTER_2"/>
    <property type="match status" value="1"/>
</dbReference>
<gene>
    <name type="primary">occP</name>
</gene>
<proteinExistence type="inferred from homology"/>
<feature type="chain" id="PRO_0000092652" description="Octopine permease ATP-binding protein P">
    <location>
        <begin position="1"/>
        <end position="262"/>
    </location>
</feature>
<feature type="domain" description="ABC transporter" evidence="1">
    <location>
        <begin position="9"/>
        <end position="254"/>
    </location>
</feature>
<feature type="binding site" evidence="1">
    <location>
        <begin position="41"/>
        <end position="48"/>
    </location>
    <ligand>
        <name>ATP</name>
        <dbReference type="ChEBI" id="CHEBI:30616"/>
    </ligand>
</feature>
<keyword id="KW-0067">ATP-binding</keyword>
<keyword id="KW-0997">Cell inner membrane</keyword>
<keyword id="KW-1003">Cell membrane</keyword>
<keyword id="KW-0472">Membrane</keyword>
<keyword id="KW-0547">Nucleotide-binding</keyword>
<keyword id="KW-0813">Transport</keyword>
<reference key="1">
    <citation type="submission" date="1996-08" db="EMBL/GenBank/DDBJ databases">
        <title>The octopine catabolism operon of Rhizobium meliloti A3.</title>
        <authorList>
            <person name="Au S."/>
            <person name="Bergeron J."/>
            <person name="Dion P."/>
        </authorList>
    </citation>
    <scope>NUCLEOTIDE SEQUENCE [GENOMIC DNA]</scope>
    <source>
        <strain>A3</strain>
    </source>
</reference>
<sequence length="262" mass="29036">MSNSVRPAVKLTGIRKNFGLLEVLHGVSLTANQGEVISILGSSGSGKSTLLRCVNMLEVPNSGSVSIMGEEIALNHRSGHPSRPKYPKQVNRLRERAAMVFQSFHLWSHLTILQNVMEAPLHVQRRDRKECHAEAEALLERVGIASKRNAFPSELSGGQQQRAAIARALAMRPEVLLFDEPTSALDPELVGEVLRVMRNLAAEGRTMLIVTHEMDFARDVSSRSVFLHQGVIAEEGLSSEMFANPRTERFRQFLRRDGAASH</sequence>
<comment type="function">
    <text>Component of the octopine active transport system probably consisting of four subunits: Q, M, P and T.</text>
</comment>
<comment type="subcellular location">
    <subcellularLocation>
        <location evidence="2">Cell inner membrane</location>
        <topology evidence="2">Peripheral membrane protein</topology>
    </subcellularLocation>
</comment>
<comment type="similarity">
    <text evidence="2">Belongs to the ABC transporter superfamily.</text>
</comment>